<accession>P82848</accession>
<name>TP1_LITPI</name>
<dbReference type="GO" id="GO:0005576">
    <property type="term" value="C:extracellular region"/>
    <property type="evidence" value="ECO:0007669"/>
    <property type="project" value="UniProtKB-SubCell"/>
</dbReference>
<dbReference type="GO" id="GO:0042742">
    <property type="term" value="P:defense response to bacterium"/>
    <property type="evidence" value="ECO:0007669"/>
    <property type="project" value="UniProtKB-KW"/>
</dbReference>
<protein>
    <recommendedName>
        <fullName>Temporin-1P</fullName>
    </recommendedName>
</protein>
<keyword id="KW-0027">Amidation</keyword>
<keyword id="KW-0878">Amphibian defense peptide</keyword>
<keyword id="KW-0044">Antibiotic</keyword>
<keyword id="KW-0929">Antimicrobial</keyword>
<keyword id="KW-0903">Direct protein sequencing</keyword>
<keyword id="KW-0964">Secreted</keyword>
<comment type="function">
    <text evidence="1">Antimicrobial peptide with activity against Gram-positive bacterium S.aureus.</text>
</comment>
<comment type="subcellular location">
    <subcellularLocation>
        <location evidence="1">Secreted</location>
    </subcellularLocation>
</comment>
<comment type="tissue specificity">
    <text evidence="3">Expressed by the skin glands.</text>
</comment>
<comment type="mass spectrometry" mass="1368.0" method="Electrospray" evidence="1"/>
<comment type="similarity">
    <text evidence="2">Belongs to the frog skin active peptide (FSAP) family. Temporin subfamily.</text>
</comment>
<comment type="online information" name="The antimicrobial peptide database">
    <link uri="https://wangapd3.com/database/query_output.php?ID=00112"/>
</comment>
<reference key="1">
    <citation type="journal article" date="2000" name="Eur. J. Biochem.">
        <title>Peptides with antimicrobial activity from four different families isolated from the skins of the North American frogs Rana luteiventris, Rana berlandieri and Rana pipiens.</title>
        <authorList>
            <person name="Goraya J."/>
            <person name="Wang Y."/>
            <person name="Li Z."/>
            <person name="O'Flaherty M."/>
            <person name="Knoop F.C."/>
            <person name="Platz J.E."/>
            <person name="Conlon J.M."/>
        </authorList>
    </citation>
    <scope>PROTEIN SEQUENCE</scope>
    <scope>FUNCTION</scope>
    <scope>AMIDATION AT LEU-13</scope>
    <scope>MASS SPECTROMETRY</scope>
    <scope>SUBCELLULAR LOCATION</scope>
    <source>
        <tissue>Skin secretion</tissue>
    </source>
</reference>
<evidence type="ECO:0000269" key="1">
    <source>
    </source>
</evidence>
<evidence type="ECO:0000305" key="2"/>
<evidence type="ECO:0000305" key="3">
    <source>
    </source>
</evidence>
<sequence length="13" mass="1370">FLPIVGKLLSGLL</sequence>
<organism>
    <name type="scientific">Lithobates pipiens</name>
    <name type="common">Northern leopard frog</name>
    <name type="synonym">Rana pipiens</name>
    <dbReference type="NCBI Taxonomy" id="8404"/>
    <lineage>
        <taxon>Eukaryota</taxon>
        <taxon>Metazoa</taxon>
        <taxon>Chordata</taxon>
        <taxon>Craniata</taxon>
        <taxon>Vertebrata</taxon>
        <taxon>Euteleostomi</taxon>
        <taxon>Amphibia</taxon>
        <taxon>Batrachia</taxon>
        <taxon>Anura</taxon>
        <taxon>Neobatrachia</taxon>
        <taxon>Ranoidea</taxon>
        <taxon>Ranidae</taxon>
        <taxon>Lithobates</taxon>
    </lineage>
</organism>
<proteinExistence type="evidence at protein level"/>
<feature type="peptide" id="PRO_0000043578" description="Temporin-1P">
    <location>
        <begin position="1"/>
        <end position="13"/>
    </location>
</feature>
<feature type="modified residue" description="Leucine amide" evidence="1">
    <location>
        <position position="13"/>
    </location>
</feature>